<sequence length="385" mass="42484">MSKPAGSTSRILDIPCKVCGDRSSGKHYGVYACDGCSGFFKRSIRRNRTYVCKSGNQGGCPVDKTHRNQCRACRLKKCLEVNMNKDAVQHERGPRTSTIRKQVALYFRGHKEESSGAPHFPATALPAPAFFTAVSQLEPHGLELAAVAGTPERQALVGLAQPTPKYPHEVNGTPMYLYEVATESVCESAARLLFMSIKWAKSVPAFSTLSLQDQLMLLEDAWRELFVLGIAQWAIPVDANTLLAVSGMNGDNTDSQKLNKIISEIQALQEVVARFRQLRLDATEFACLKCIVTFKAVPTHSGSELRSFRNAAAIAALQDEAQLTLNSYIHTRYPTQPCRFGKLLLLLPALRSISPSTIEEVFFKKTIGNVPITRLLSDMYKSSDI</sequence>
<proteinExistence type="evidence at transcript level"/>
<evidence type="ECO:0000250" key="1"/>
<evidence type="ECO:0000255" key="2">
    <source>
        <dbReference type="PROSITE-ProRule" id="PRU00407"/>
    </source>
</evidence>
<evidence type="ECO:0000255" key="3">
    <source>
        <dbReference type="PROSITE-ProRule" id="PRU01189"/>
    </source>
</evidence>
<evidence type="ECO:0000269" key="4">
    <source>
    </source>
</evidence>
<evidence type="ECO:0000305" key="5"/>
<gene>
    <name type="primary">NR2E1</name>
    <name type="synonym">TLX</name>
</gene>
<accession>Q91379</accession>
<dbReference type="EMBL" id="S72373">
    <property type="protein sequence ID" value="AAB31467.1"/>
    <property type="molecule type" value="mRNA"/>
</dbReference>
<dbReference type="PIR" id="S48074">
    <property type="entry name" value="S48074"/>
</dbReference>
<dbReference type="RefSeq" id="NP_990501.1">
    <property type="nucleotide sequence ID" value="NM_205170.2"/>
</dbReference>
<dbReference type="SMR" id="Q91379"/>
<dbReference type="FunCoup" id="Q91379">
    <property type="interactions" value="39"/>
</dbReference>
<dbReference type="STRING" id="9031.ENSGALP00000036481"/>
<dbReference type="PaxDb" id="9031-ENSGALP00000036481"/>
<dbReference type="Ensembl" id="ENSGALT00010034754.1">
    <property type="protein sequence ID" value="ENSGALP00010020376.1"/>
    <property type="gene ID" value="ENSGALG00010014453.1"/>
</dbReference>
<dbReference type="GeneID" id="396082"/>
<dbReference type="KEGG" id="gga:396082"/>
<dbReference type="CTD" id="7101"/>
<dbReference type="VEuPathDB" id="HostDB:geneid_396082"/>
<dbReference type="eggNOG" id="KOG3575">
    <property type="taxonomic scope" value="Eukaryota"/>
</dbReference>
<dbReference type="GeneTree" id="ENSGT00940000156693"/>
<dbReference type="InParanoid" id="Q91379"/>
<dbReference type="OMA" id="IMGMVTR"/>
<dbReference type="OrthoDB" id="10045640at2759"/>
<dbReference type="PhylomeDB" id="Q91379"/>
<dbReference type="PRO" id="PR:Q91379"/>
<dbReference type="Proteomes" id="UP000000539">
    <property type="component" value="Chromosome 3"/>
</dbReference>
<dbReference type="GO" id="GO:0005634">
    <property type="term" value="C:nucleus"/>
    <property type="evidence" value="ECO:0007669"/>
    <property type="project" value="UniProtKB-SubCell"/>
</dbReference>
<dbReference type="GO" id="GO:0004879">
    <property type="term" value="F:nuclear receptor activity"/>
    <property type="evidence" value="ECO:0000318"/>
    <property type="project" value="GO_Central"/>
</dbReference>
<dbReference type="GO" id="GO:0000978">
    <property type="term" value="F:RNA polymerase II cis-regulatory region sequence-specific DNA binding"/>
    <property type="evidence" value="ECO:0000318"/>
    <property type="project" value="GO_Central"/>
</dbReference>
<dbReference type="GO" id="GO:0008270">
    <property type="term" value="F:zinc ion binding"/>
    <property type="evidence" value="ECO:0007669"/>
    <property type="project" value="UniProtKB-KW"/>
</dbReference>
<dbReference type="GO" id="GO:0030154">
    <property type="term" value="P:cell differentiation"/>
    <property type="evidence" value="ECO:0000318"/>
    <property type="project" value="GO_Central"/>
</dbReference>
<dbReference type="GO" id="GO:0000122">
    <property type="term" value="P:negative regulation of transcription by RNA polymerase II"/>
    <property type="evidence" value="ECO:0000318"/>
    <property type="project" value="GO_Central"/>
</dbReference>
<dbReference type="CDD" id="cd07163">
    <property type="entry name" value="NR_DBD_TLX"/>
    <property type="match status" value="1"/>
</dbReference>
<dbReference type="CDD" id="cd06950">
    <property type="entry name" value="NR_LBD_Tlx_PNR_like"/>
    <property type="match status" value="1"/>
</dbReference>
<dbReference type="FunFam" id="3.30.50.10:FF:000019">
    <property type="entry name" value="Nuclear receptor subfamily 2 group E member"/>
    <property type="match status" value="1"/>
</dbReference>
<dbReference type="FunFam" id="1.10.565.10:FF:000019">
    <property type="entry name" value="Nuclear receptor subfamily 2 group E member 1"/>
    <property type="match status" value="1"/>
</dbReference>
<dbReference type="Gene3D" id="3.30.50.10">
    <property type="entry name" value="Erythroid Transcription Factor GATA-1, subunit A"/>
    <property type="match status" value="1"/>
</dbReference>
<dbReference type="Gene3D" id="1.10.565.10">
    <property type="entry name" value="Retinoid X Receptor"/>
    <property type="match status" value="1"/>
</dbReference>
<dbReference type="InterPro" id="IPR035500">
    <property type="entry name" value="NHR-like_dom_sf"/>
</dbReference>
<dbReference type="InterPro" id="IPR000536">
    <property type="entry name" value="Nucl_hrmn_rcpt_lig-bd"/>
</dbReference>
<dbReference type="InterPro" id="IPR050274">
    <property type="entry name" value="Nuclear_hormone_rcpt_NR2"/>
</dbReference>
<dbReference type="InterPro" id="IPR001723">
    <property type="entry name" value="Nuclear_hrmn_rcpt"/>
</dbReference>
<dbReference type="InterPro" id="IPR001628">
    <property type="entry name" value="Znf_hrmn_rcpt"/>
</dbReference>
<dbReference type="InterPro" id="IPR013088">
    <property type="entry name" value="Znf_NHR/GATA"/>
</dbReference>
<dbReference type="PANTHER" id="PTHR24083">
    <property type="entry name" value="NUCLEAR HORMONE RECEPTOR"/>
    <property type="match status" value="1"/>
</dbReference>
<dbReference type="Pfam" id="PF00104">
    <property type="entry name" value="Hormone_recep"/>
    <property type="match status" value="1"/>
</dbReference>
<dbReference type="Pfam" id="PF00105">
    <property type="entry name" value="zf-C4"/>
    <property type="match status" value="1"/>
</dbReference>
<dbReference type="PRINTS" id="PR00398">
    <property type="entry name" value="STRDHORMONER"/>
</dbReference>
<dbReference type="PRINTS" id="PR00047">
    <property type="entry name" value="STROIDFINGER"/>
</dbReference>
<dbReference type="SMART" id="SM00430">
    <property type="entry name" value="HOLI"/>
    <property type="match status" value="1"/>
</dbReference>
<dbReference type="SMART" id="SM00399">
    <property type="entry name" value="ZnF_C4"/>
    <property type="match status" value="1"/>
</dbReference>
<dbReference type="SUPFAM" id="SSF57716">
    <property type="entry name" value="Glucocorticoid receptor-like (DNA-binding domain)"/>
    <property type="match status" value="1"/>
</dbReference>
<dbReference type="SUPFAM" id="SSF48508">
    <property type="entry name" value="Nuclear receptor ligand-binding domain"/>
    <property type="match status" value="1"/>
</dbReference>
<dbReference type="PROSITE" id="PS51843">
    <property type="entry name" value="NR_LBD"/>
    <property type="match status" value="1"/>
</dbReference>
<dbReference type="PROSITE" id="PS00031">
    <property type="entry name" value="NUCLEAR_REC_DBD_1"/>
    <property type="match status" value="1"/>
</dbReference>
<dbReference type="PROSITE" id="PS51030">
    <property type="entry name" value="NUCLEAR_REC_DBD_2"/>
    <property type="match status" value="1"/>
</dbReference>
<comment type="function">
    <text evidence="1 4">Orphan receptor that binds DNA as a monomer to hormone response elements (HRE) containing an extended core motif half-site sequence 5'-AAGGTCA-3' in which the 5' flanking nucleotides participate in determining receptor specificity. May be required to pattern anterior brain differentiation (By similarity). Involved in the regulation of retinal development.</text>
</comment>
<comment type="subunit">
    <text evidence="1">Monomer.</text>
</comment>
<comment type="subcellular location">
    <subcellularLocation>
        <location evidence="2">Nucleus</location>
    </subcellularLocation>
</comment>
<comment type="tissue specificity">
    <text>Expressed exclusively in the neuroepithelium of the embryonic brain.</text>
</comment>
<comment type="similarity">
    <text evidence="5">Belongs to the nuclear hormone receptor family. NR2 subfamily.</text>
</comment>
<organism>
    <name type="scientific">Gallus gallus</name>
    <name type="common">Chicken</name>
    <dbReference type="NCBI Taxonomy" id="9031"/>
    <lineage>
        <taxon>Eukaryota</taxon>
        <taxon>Metazoa</taxon>
        <taxon>Chordata</taxon>
        <taxon>Craniata</taxon>
        <taxon>Vertebrata</taxon>
        <taxon>Euteleostomi</taxon>
        <taxon>Archelosauria</taxon>
        <taxon>Archosauria</taxon>
        <taxon>Dinosauria</taxon>
        <taxon>Saurischia</taxon>
        <taxon>Theropoda</taxon>
        <taxon>Coelurosauria</taxon>
        <taxon>Aves</taxon>
        <taxon>Neognathae</taxon>
        <taxon>Galloanserae</taxon>
        <taxon>Galliformes</taxon>
        <taxon>Phasianidae</taxon>
        <taxon>Phasianinae</taxon>
        <taxon>Gallus</taxon>
    </lineage>
</organism>
<feature type="chain" id="PRO_0000053594" description="Nuclear receptor subfamily 2 group E member 1">
    <location>
        <begin position="1"/>
        <end position="385"/>
    </location>
</feature>
<feature type="domain" description="NR LBD" evidence="3">
    <location>
        <begin position="155"/>
        <end position="383"/>
    </location>
</feature>
<feature type="DNA-binding region" description="Nuclear receptor" evidence="2">
    <location>
        <begin position="16"/>
        <end position="83"/>
    </location>
</feature>
<feature type="zinc finger region" description="NR C4-type" evidence="2">
    <location>
        <begin position="16"/>
        <end position="36"/>
    </location>
</feature>
<feature type="zinc finger region" description="NR C4-type" evidence="2">
    <location>
        <begin position="52"/>
        <end position="78"/>
    </location>
</feature>
<protein>
    <recommendedName>
        <fullName>Nuclear receptor subfamily 2 group E member 1</fullName>
    </recommendedName>
    <alternativeName>
        <fullName>Nuclear receptor TLX</fullName>
    </alternativeName>
    <alternativeName>
        <fullName>Protein tailless homolog</fullName>
        <shortName>Tll</shortName>
    </alternativeName>
</protein>
<keyword id="KW-0010">Activator</keyword>
<keyword id="KW-0217">Developmental protein</keyword>
<keyword id="KW-0238">DNA-binding</keyword>
<keyword id="KW-0479">Metal-binding</keyword>
<keyword id="KW-0539">Nucleus</keyword>
<keyword id="KW-0675">Receptor</keyword>
<keyword id="KW-1185">Reference proteome</keyword>
<keyword id="KW-0678">Repressor</keyword>
<keyword id="KW-0804">Transcription</keyword>
<keyword id="KW-0805">Transcription regulation</keyword>
<keyword id="KW-0862">Zinc</keyword>
<keyword id="KW-0863">Zinc-finger</keyword>
<name>NR2E1_CHICK</name>
<reference key="1">
    <citation type="journal article" date="1994" name="Nature">
        <title>Relationship between Drosophila gap gene tailless and a vertebrate nuclear receptor Tlx.</title>
        <authorList>
            <person name="Yu R.T."/>
            <person name="McKeown M."/>
            <person name="Evans R.M."/>
            <person name="Umesono K."/>
        </authorList>
    </citation>
    <scope>NUCLEOTIDE SEQUENCE [MRNA]</scope>
</reference>
<reference key="2">
    <citation type="journal article" date="2000" name="Proc. Natl. Acad. Sci. U.S.A.">
        <title>The orphan nuclear receptor Tlx regulates Pax2 and is essential for vision.</title>
        <authorList>
            <person name="Yu R.T."/>
            <person name="Chiang M.-Y."/>
            <person name="Tanabe T."/>
            <person name="Kobayashi M."/>
            <person name="Yasuda K."/>
            <person name="Evans R.M."/>
            <person name="Umesono K."/>
        </authorList>
    </citation>
    <scope>FUNCTION</scope>
</reference>